<sequence length="126" mass="14255">MSNRKLGRTSSQRKAMLRDLTTDLIINETIVTTEARAKEVRRTVEKMITLGKKGDLSARRAAAAYVRNEIAIKDFNEETETFPTALQKLFNDLAKRYEGRNGGYTRILKVEPRRGDAAPMAIIELV</sequence>
<proteinExistence type="inferred from homology"/>
<accession>Q02W52</accession>
<feature type="chain" id="PRO_1000055855" description="Large ribosomal subunit protein bL17">
    <location>
        <begin position="1"/>
        <end position="126"/>
    </location>
</feature>
<protein>
    <recommendedName>
        <fullName evidence="1">Large ribosomal subunit protein bL17</fullName>
    </recommendedName>
    <alternativeName>
        <fullName evidence="2">50S ribosomal protein L17</fullName>
    </alternativeName>
</protein>
<keyword id="KW-0687">Ribonucleoprotein</keyword>
<keyword id="KW-0689">Ribosomal protein</keyword>
<reference key="1">
    <citation type="journal article" date="2006" name="Proc. Natl. Acad. Sci. U.S.A.">
        <title>Comparative genomics of the lactic acid bacteria.</title>
        <authorList>
            <person name="Makarova K.S."/>
            <person name="Slesarev A."/>
            <person name="Wolf Y.I."/>
            <person name="Sorokin A."/>
            <person name="Mirkin B."/>
            <person name="Koonin E.V."/>
            <person name="Pavlov A."/>
            <person name="Pavlova N."/>
            <person name="Karamychev V."/>
            <person name="Polouchine N."/>
            <person name="Shakhova V."/>
            <person name="Grigoriev I."/>
            <person name="Lou Y."/>
            <person name="Rohksar D."/>
            <person name="Lucas S."/>
            <person name="Huang K."/>
            <person name="Goodstein D.M."/>
            <person name="Hawkins T."/>
            <person name="Plengvidhya V."/>
            <person name="Welker D."/>
            <person name="Hughes J."/>
            <person name="Goh Y."/>
            <person name="Benson A."/>
            <person name="Baldwin K."/>
            <person name="Lee J.-H."/>
            <person name="Diaz-Muniz I."/>
            <person name="Dosti B."/>
            <person name="Smeianov V."/>
            <person name="Wechter W."/>
            <person name="Barabote R."/>
            <person name="Lorca G."/>
            <person name="Altermann E."/>
            <person name="Barrangou R."/>
            <person name="Ganesan B."/>
            <person name="Xie Y."/>
            <person name="Rawsthorne H."/>
            <person name="Tamir D."/>
            <person name="Parker C."/>
            <person name="Breidt F."/>
            <person name="Broadbent J.R."/>
            <person name="Hutkins R."/>
            <person name="O'Sullivan D."/>
            <person name="Steele J."/>
            <person name="Unlu G."/>
            <person name="Saier M.H. Jr."/>
            <person name="Klaenhammer T."/>
            <person name="Richardson P."/>
            <person name="Kozyavkin S."/>
            <person name="Weimer B.C."/>
            <person name="Mills D.A."/>
        </authorList>
    </citation>
    <scope>NUCLEOTIDE SEQUENCE [LARGE SCALE GENOMIC DNA]</scope>
    <source>
        <strain>SK11</strain>
    </source>
</reference>
<gene>
    <name evidence="1" type="primary">rplQ</name>
    <name type="ordered locus">LACR_2374</name>
</gene>
<name>RL17_LACLS</name>
<evidence type="ECO:0000255" key="1">
    <source>
        <dbReference type="HAMAP-Rule" id="MF_01368"/>
    </source>
</evidence>
<evidence type="ECO:0000305" key="2"/>
<comment type="subunit">
    <text evidence="1">Part of the 50S ribosomal subunit. Contacts protein L32.</text>
</comment>
<comment type="similarity">
    <text evidence="1">Belongs to the bacterial ribosomal protein bL17 family.</text>
</comment>
<organism>
    <name type="scientific">Lactococcus lactis subsp. cremoris (strain SK11)</name>
    <dbReference type="NCBI Taxonomy" id="272622"/>
    <lineage>
        <taxon>Bacteria</taxon>
        <taxon>Bacillati</taxon>
        <taxon>Bacillota</taxon>
        <taxon>Bacilli</taxon>
        <taxon>Lactobacillales</taxon>
        <taxon>Streptococcaceae</taxon>
        <taxon>Lactococcus</taxon>
        <taxon>Lactococcus cremoris subsp. cremoris</taxon>
    </lineage>
</organism>
<dbReference type="EMBL" id="CP000425">
    <property type="protein sequence ID" value="ABJ73820.1"/>
    <property type="molecule type" value="Genomic_DNA"/>
</dbReference>
<dbReference type="RefSeq" id="WP_003130558.1">
    <property type="nucleotide sequence ID" value="NC_008527.1"/>
</dbReference>
<dbReference type="SMR" id="Q02W52"/>
<dbReference type="GeneID" id="89634419"/>
<dbReference type="KEGG" id="llc:LACR_2374"/>
<dbReference type="HOGENOM" id="CLU_074407_2_2_9"/>
<dbReference type="Proteomes" id="UP000000240">
    <property type="component" value="Chromosome"/>
</dbReference>
<dbReference type="GO" id="GO:0022625">
    <property type="term" value="C:cytosolic large ribosomal subunit"/>
    <property type="evidence" value="ECO:0007669"/>
    <property type="project" value="TreeGrafter"/>
</dbReference>
<dbReference type="GO" id="GO:0003735">
    <property type="term" value="F:structural constituent of ribosome"/>
    <property type="evidence" value="ECO:0007669"/>
    <property type="project" value="InterPro"/>
</dbReference>
<dbReference type="GO" id="GO:0006412">
    <property type="term" value="P:translation"/>
    <property type="evidence" value="ECO:0007669"/>
    <property type="project" value="UniProtKB-UniRule"/>
</dbReference>
<dbReference type="FunFam" id="3.90.1030.10:FF:000002">
    <property type="entry name" value="50S ribosomal protein L17"/>
    <property type="match status" value="1"/>
</dbReference>
<dbReference type="Gene3D" id="3.90.1030.10">
    <property type="entry name" value="Ribosomal protein L17"/>
    <property type="match status" value="1"/>
</dbReference>
<dbReference type="HAMAP" id="MF_01368">
    <property type="entry name" value="Ribosomal_bL17"/>
    <property type="match status" value="1"/>
</dbReference>
<dbReference type="InterPro" id="IPR000456">
    <property type="entry name" value="Ribosomal_bL17"/>
</dbReference>
<dbReference type="InterPro" id="IPR047859">
    <property type="entry name" value="Ribosomal_bL17_CS"/>
</dbReference>
<dbReference type="InterPro" id="IPR036373">
    <property type="entry name" value="Ribosomal_bL17_sf"/>
</dbReference>
<dbReference type="NCBIfam" id="TIGR00059">
    <property type="entry name" value="L17"/>
    <property type="match status" value="1"/>
</dbReference>
<dbReference type="PANTHER" id="PTHR14413:SF16">
    <property type="entry name" value="LARGE RIBOSOMAL SUBUNIT PROTEIN BL17M"/>
    <property type="match status" value="1"/>
</dbReference>
<dbReference type="PANTHER" id="PTHR14413">
    <property type="entry name" value="RIBOSOMAL PROTEIN L17"/>
    <property type="match status" value="1"/>
</dbReference>
<dbReference type="Pfam" id="PF01196">
    <property type="entry name" value="Ribosomal_L17"/>
    <property type="match status" value="1"/>
</dbReference>
<dbReference type="SUPFAM" id="SSF64263">
    <property type="entry name" value="Prokaryotic ribosomal protein L17"/>
    <property type="match status" value="1"/>
</dbReference>
<dbReference type="PROSITE" id="PS01167">
    <property type="entry name" value="RIBOSOMAL_L17"/>
    <property type="match status" value="1"/>
</dbReference>